<dbReference type="EC" id="3.6.5.2" evidence="2"/>
<dbReference type="EMBL" id="DQ917629">
    <property type="protein sequence ID" value="ABI97174.1"/>
    <property type="molecule type" value="mRNA"/>
</dbReference>
<dbReference type="RefSeq" id="NP_001116652.1">
    <property type="nucleotide sequence ID" value="NM_001123180.1"/>
</dbReference>
<dbReference type="RefSeq" id="XP_020923850.1">
    <property type="nucleotide sequence ID" value="XM_021068191.1"/>
</dbReference>
<dbReference type="RefSeq" id="XP_020923851.1">
    <property type="nucleotide sequence ID" value="XM_021068192.1"/>
</dbReference>
<dbReference type="SMR" id="Q06AU6"/>
<dbReference type="FunCoup" id="Q06AU6">
    <property type="interactions" value="3186"/>
</dbReference>
<dbReference type="STRING" id="9823.ENSSSCP00000034240"/>
<dbReference type="PaxDb" id="9823-ENSSSCP00000026606"/>
<dbReference type="PeptideAtlas" id="Q06AU6"/>
<dbReference type="Ensembl" id="ENSSSCT00000045035.3">
    <property type="protein sequence ID" value="ENSSSCP00000034240.1"/>
    <property type="gene ID" value="ENSSSCG00000037653.3"/>
</dbReference>
<dbReference type="Ensembl" id="ENSSSCT00015059134.1">
    <property type="protein sequence ID" value="ENSSSCP00015023791.1"/>
    <property type="gene ID" value="ENSSSCG00015044242.1"/>
</dbReference>
<dbReference type="Ensembl" id="ENSSSCT00025050317.1">
    <property type="protein sequence ID" value="ENSSSCP00025021475.1"/>
    <property type="gene ID" value="ENSSSCG00025036983.1"/>
</dbReference>
<dbReference type="Ensembl" id="ENSSSCT00030062424.1">
    <property type="protein sequence ID" value="ENSSSCP00030028544.1"/>
    <property type="gene ID" value="ENSSSCG00030044728.1"/>
</dbReference>
<dbReference type="Ensembl" id="ENSSSCT00035081170.1">
    <property type="protein sequence ID" value="ENSSSCP00035033541.1"/>
    <property type="gene ID" value="ENSSSCG00035060479.1"/>
</dbReference>
<dbReference type="Ensembl" id="ENSSSCT00040001128.1">
    <property type="protein sequence ID" value="ENSSSCP00040000270.1"/>
    <property type="gene ID" value="ENSSSCG00040000960.1"/>
</dbReference>
<dbReference type="Ensembl" id="ENSSSCT00045025995.1">
    <property type="protein sequence ID" value="ENSSSCP00045017943.1"/>
    <property type="gene ID" value="ENSSSCG00045015326.1"/>
</dbReference>
<dbReference type="Ensembl" id="ENSSSCT00050008385.1">
    <property type="protein sequence ID" value="ENSSSCP00050003600.1"/>
    <property type="gene ID" value="ENSSSCG00050006145.1"/>
</dbReference>
<dbReference type="Ensembl" id="ENSSSCT00055013503.1">
    <property type="protein sequence ID" value="ENSSSCP00055010622.1"/>
    <property type="gene ID" value="ENSSSCG00055006953.1"/>
</dbReference>
<dbReference type="Ensembl" id="ENSSSCT00060075853.1">
    <property type="protein sequence ID" value="ENSSSCP00060032777.1"/>
    <property type="gene ID" value="ENSSSCG00060055677.1"/>
</dbReference>
<dbReference type="Ensembl" id="ENSSSCT00065065698.1">
    <property type="protein sequence ID" value="ENSSSCP00065028469.1"/>
    <property type="gene ID" value="ENSSSCG00065048005.1"/>
</dbReference>
<dbReference type="Ensembl" id="ENSSSCT00070036243.1">
    <property type="protein sequence ID" value="ENSSSCP00070030298.1"/>
    <property type="gene ID" value="ENSSSCG00070018368.1"/>
</dbReference>
<dbReference type="Ensembl" id="ENSSSCT00070036245.1">
    <property type="protein sequence ID" value="ENSSSCP00070030300.1"/>
    <property type="gene ID" value="ENSSSCG00070018368.1"/>
</dbReference>
<dbReference type="Ensembl" id="ENSSSCT00085049102">
    <property type="protein sequence ID" value="ENSSSCP00085034434"/>
    <property type="gene ID" value="ENSSSCG00085025544"/>
</dbReference>
<dbReference type="Ensembl" id="ENSSSCT00090020269">
    <property type="protein sequence ID" value="ENSSSCP00090012499"/>
    <property type="gene ID" value="ENSSSCG00090011501"/>
</dbReference>
<dbReference type="Ensembl" id="ENSSSCT00105052545">
    <property type="protein sequence ID" value="ENSSSCP00105036951"/>
    <property type="gene ID" value="ENSSSCG00105027635"/>
</dbReference>
<dbReference type="Ensembl" id="ENSSSCT00110024316">
    <property type="protein sequence ID" value="ENSSSCP00110016475"/>
    <property type="gene ID" value="ENSSSCG00110012688"/>
</dbReference>
<dbReference type="Ensembl" id="ENSSSCT00115006217">
    <property type="protein sequence ID" value="ENSSSCP00115005807"/>
    <property type="gene ID" value="ENSSSCG00115003638"/>
</dbReference>
<dbReference type="Ensembl" id="ENSSSCT00130016918">
    <property type="protein sequence ID" value="ENSSSCP00130021140"/>
    <property type="gene ID" value="ENSSSCG00130015327"/>
</dbReference>
<dbReference type="GeneID" id="100144499"/>
<dbReference type="KEGG" id="ssc:100144499"/>
<dbReference type="CTD" id="5868"/>
<dbReference type="VGNC" id="VGNC:108687">
    <property type="gene designation" value="RAB5A"/>
</dbReference>
<dbReference type="eggNOG" id="KOG0092">
    <property type="taxonomic scope" value="Eukaryota"/>
</dbReference>
<dbReference type="GeneTree" id="ENSGT00940000154337"/>
<dbReference type="InParanoid" id="Q06AU6"/>
<dbReference type="OMA" id="SRTCCSN"/>
<dbReference type="OrthoDB" id="63533at2759"/>
<dbReference type="Reactome" id="R-SSC-8854214">
    <property type="pathway name" value="TBC/RABGAPs"/>
</dbReference>
<dbReference type="Reactome" id="R-SSC-8856828">
    <property type="pathway name" value="Clathrin-mediated endocytosis"/>
</dbReference>
<dbReference type="Reactome" id="R-SSC-8876198">
    <property type="pathway name" value="RAB GEFs exchange GTP for GDP on RABs"/>
</dbReference>
<dbReference type="Reactome" id="R-SSC-983231">
    <property type="pathway name" value="Factors involved in megakaryocyte development and platelet production"/>
</dbReference>
<dbReference type="Proteomes" id="UP000008227">
    <property type="component" value="Chromosome 13"/>
</dbReference>
<dbReference type="Proteomes" id="UP000314985">
    <property type="component" value="Chromosome 13"/>
</dbReference>
<dbReference type="Proteomes" id="UP000694570">
    <property type="component" value="Unplaced"/>
</dbReference>
<dbReference type="Proteomes" id="UP000694571">
    <property type="component" value="Unplaced"/>
</dbReference>
<dbReference type="Proteomes" id="UP000694720">
    <property type="component" value="Unplaced"/>
</dbReference>
<dbReference type="Proteomes" id="UP000694722">
    <property type="component" value="Unplaced"/>
</dbReference>
<dbReference type="Proteomes" id="UP000694723">
    <property type="component" value="Unplaced"/>
</dbReference>
<dbReference type="Proteomes" id="UP000694724">
    <property type="component" value="Unplaced"/>
</dbReference>
<dbReference type="Proteomes" id="UP000694725">
    <property type="component" value="Unplaced"/>
</dbReference>
<dbReference type="Proteomes" id="UP000694726">
    <property type="component" value="Unplaced"/>
</dbReference>
<dbReference type="Proteomes" id="UP000694727">
    <property type="component" value="Unplaced"/>
</dbReference>
<dbReference type="Proteomes" id="UP000694728">
    <property type="component" value="Unplaced"/>
</dbReference>
<dbReference type="Bgee" id="ENSSSCG00000037653">
    <property type="expression patterns" value="Expressed in Ammon's horn and 45 other cell types or tissues"/>
</dbReference>
<dbReference type="GO" id="GO:0015629">
    <property type="term" value="C:actin cytoskeleton"/>
    <property type="evidence" value="ECO:0007669"/>
    <property type="project" value="Ensembl"/>
</dbReference>
<dbReference type="GO" id="GO:0030424">
    <property type="term" value="C:axon"/>
    <property type="evidence" value="ECO:0000318"/>
    <property type="project" value="GO_Central"/>
</dbReference>
<dbReference type="GO" id="GO:0005737">
    <property type="term" value="C:cytoplasm"/>
    <property type="evidence" value="ECO:0000250"/>
    <property type="project" value="UniProtKB"/>
</dbReference>
<dbReference type="GO" id="GO:0098559">
    <property type="term" value="C:cytoplasmic side of early endosome membrane"/>
    <property type="evidence" value="ECO:0007669"/>
    <property type="project" value="Ensembl"/>
</dbReference>
<dbReference type="GO" id="GO:0005829">
    <property type="term" value="C:cytosol"/>
    <property type="evidence" value="ECO:0007669"/>
    <property type="project" value="UniProtKB-SubCell"/>
</dbReference>
<dbReference type="GO" id="GO:0030425">
    <property type="term" value="C:dendrite"/>
    <property type="evidence" value="ECO:0000318"/>
    <property type="project" value="GO_Central"/>
</dbReference>
<dbReference type="GO" id="GO:0005769">
    <property type="term" value="C:early endosome"/>
    <property type="evidence" value="ECO:0000250"/>
    <property type="project" value="UniProtKB"/>
</dbReference>
<dbReference type="GO" id="GO:0032009">
    <property type="term" value="C:early phagosome"/>
    <property type="evidence" value="ECO:0000250"/>
    <property type="project" value="UniProtKB"/>
</dbReference>
<dbReference type="GO" id="GO:0030139">
    <property type="term" value="C:endocytic vesicle"/>
    <property type="evidence" value="ECO:0000318"/>
    <property type="project" value="GO_Central"/>
</dbReference>
<dbReference type="GO" id="GO:0012505">
    <property type="term" value="C:endomembrane system"/>
    <property type="evidence" value="ECO:0000318"/>
    <property type="project" value="GO_Central"/>
</dbReference>
<dbReference type="GO" id="GO:0005768">
    <property type="term" value="C:endosome"/>
    <property type="evidence" value="ECO:0000250"/>
    <property type="project" value="UniProtKB"/>
</dbReference>
<dbReference type="GO" id="GO:0042470">
    <property type="term" value="C:melanosome"/>
    <property type="evidence" value="ECO:0007669"/>
    <property type="project" value="UniProtKB-SubCell"/>
</dbReference>
<dbReference type="GO" id="GO:0045121">
    <property type="term" value="C:membrane raft"/>
    <property type="evidence" value="ECO:0007669"/>
    <property type="project" value="Ensembl"/>
</dbReference>
<dbReference type="GO" id="GO:0005654">
    <property type="term" value="C:nucleoplasm"/>
    <property type="evidence" value="ECO:0007669"/>
    <property type="project" value="Ensembl"/>
</dbReference>
<dbReference type="GO" id="GO:0045335">
    <property type="term" value="C:phagocytic vesicle"/>
    <property type="evidence" value="ECO:0000250"/>
    <property type="project" value="UniProtKB"/>
</dbReference>
<dbReference type="GO" id="GO:0030670">
    <property type="term" value="C:phagocytic vesicle membrane"/>
    <property type="evidence" value="ECO:0007669"/>
    <property type="project" value="UniProtKB-SubCell"/>
</dbReference>
<dbReference type="GO" id="GO:0005886">
    <property type="term" value="C:plasma membrane"/>
    <property type="evidence" value="ECO:0000318"/>
    <property type="project" value="GO_Central"/>
</dbReference>
<dbReference type="GO" id="GO:0001726">
    <property type="term" value="C:ruffle"/>
    <property type="evidence" value="ECO:0007669"/>
    <property type="project" value="UniProtKB-SubCell"/>
</dbReference>
<dbReference type="GO" id="GO:0030672">
    <property type="term" value="C:synaptic vesicle membrane"/>
    <property type="evidence" value="ECO:0000318"/>
    <property type="project" value="GO_Central"/>
</dbReference>
<dbReference type="GO" id="GO:0043195">
    <property type="term" value="C:terminal bouton"/>
    <property type="evidence" value="ECO:0007669"/>
    <property type="project" value="Ensembl"/>
</dbReference>
<dbReference type="GO" id="GO:0003925">
    <property type="term" value="F:G protein activity"/>
    <property type="evidence" value="ECO:0007669"/>
    <property type="project" value="UniProtKB-EC"/>
</dbReference>
<dbReference type="GO" id="GO:0019003">
    <property type="term" value="F:GDP binding"/>
    <property type="evidence" value="ECO:0000250"/>
    <property type="project" value="UniProtKB"/>
</dbReference>
<dbReference type="GO" id="GO:0005525">
    <property type="term" value="F:GTP binding"/>
    <property type="evidence" value="ECO:0000250"/>
    <property type="project" value="UniProtKB"/>
</dbReference>
<dbReference type="GO" id="GO:0003924">
    <property type="term" value="F:GTPase activity"/>
    <property type="evidence" value="ECO:0000250"/>
    <property type="project" value="UniProtKB"/>
</dbReference>
<dbReference type="GO" id="GO:0150093">
    <property type="term" value="P:amyloid-beta clearance by transcytosis"/>
    <property type="evidence" value="ECO:0007669"/>
    <property type="project" value="Ensembl"/>
</dbReference>
<dbReference type="GO" id="GO:0060070">
    <property type="term" value="P:canonical Wnt signaling pathway"/>
    <property type="evidence" value="ECO:0007669"/>
    <property type="project" value="Ensembl"/>
</dbReference>
<dbReference type="GO" id="GO:0045022">
    <property type="term" value="P:early endosome to late endosome transport"/>
    <property type="evidence" value="ECO:0007669"/>
    <property type="project" value="Ensembl"/>
</dbReference>
<dbReference type="GO" id="GO:0006897">
    <property type="term" value="P:endocytosis"/>
    <property type="evidence" value="ECO:0000250"/>
    <property type="project" value="UniProtKB"/>
</dbReference>
<dbReference type="GO" id="GO:0006886">
    <property type="term" value="P:intracellular protein transport"/>
    <property type="evidence" value="ECO:0000318"/>
    <property type="project" value="GO_Central"/>
</dbReference>
<dbReference type="GO" id="GO:0044788">
    <property type="term" value="P:modulation by host of viral process"/>
    <property type="evidence" value="ECO:0007669"/>
    <property type="project" value="Ensembl"/>
</dbReference>
<dbReference type="GO" id="GO:0006909">
    <property type="term" value="P:phagocytosis"/>
    <property type="evidence" value="ECO:0007669"/>
    <property type="project" value="UniProtKB-KW"/>
</dbReference>
<dbReference type="GO" id="GO:0045921">
    <property type="term" value="P:positive regulation of exocytosis"/>
    <property type="evidence" value="ECO:0007669"/>
    <property type="project" value="Ensembl"/>
</dbReference>
<dbReference type="GO" id="GO:0031623">
    <property type="term" value="P:receptor internalization"/>
    <property type="evidence" value="ECO:0007669"/>
    <property type="project" value="Ensembl"/>
</dbReference>
<dbReference type="GO" id="GO:0051036">
    <property type="term" value="P:regulation of endosome size"/>
    <property type="evidence" value="ECO:0007669"/>
    <property type="project" value="Ensembl"/>
</dbReference>
<dbReference type="GO" id="GO:0051489">
    <property type="term" value="P:regulation of filopodium assembly"/>
    <property type="evidence" value="ECO:0007669"/>
    <property type="project" value="Ensembl"/>
</dbReference>
<dbReference type="GO" id="GO:0048169">
    <property type="term" value="P:regulation of long-term neuronal synaptic plasticity"/>
    <property type="evidence" value="ECO:0000318"/>
    <property type="project" value="GO_Central"/>
</dbReference>
<dbReference type="GO" id="GO:2000300">
    <property type="term" value="P:regulation of synaptic vesicle exocytosis"/>
    <property type="evidence" value="ECO:0007669"/>
    <property type="project" value="Ensembl"/>
</dbReference>
<dbReference type="GO" id="GO:0036465">
    <property type="term" value="P:synaptic vesicle recycling"/>
    <property type="evidence" value="ECO:0007669"/>
    <property type="project" value="Ensembl"/>
</dbReference>
<dbReference type="CDD" id="cd01860">
    <property type="entry name" value="Rab5_related"/>
    <property type="match status" value="1"/>
</dbReference>
<dbReference type="FunFam" id="3.40.50.300:FF:000180">
    <property type="entry name" value="Member RAS oncogene family"/>
    <property type="match status" value="1"/>
</dbReference>
<dbReference type="Gene3D" id="3.40.50.300">
    <property type="entry name" value="P-loop containing nucleotide triphosphate hydrolases"/>
    <property type="match status" value="1"/>
</dbReference>
<dbReference type="InterPro" id="IPR027417">
    <property type="entry name" value="P-loop_NTPase"/>
</dbReference>
<dbReference type="InterPro" id="IPR005225">
    <property type="entry name" value="Small_GTP-bd"/>
</dbReference>
<dbReference type="InterPro" id="IPR001806">
    <property type="entry name" value="Small_GTPase"/>
</dbReference>
<dbReference type="NCBIfam" id="TIGR00231">
    <property type="entry name" value="small_GTP"/>
    <property type="match status" value="1"/>
</dbReference>
<dbReference type="PANTHER" id="PTHR47978">
    <property type="match status" value="1"/>
</dbReference>
<dbReference type="Pfam" id="PF00071">
    <property type="entry name" value="Ras"/>
    <property type="match status" value="1"/>
</dbReference>
<dbReference type="PRINTS" id="PR00449">
    <property type="entry name" value="RASTRNSFRMNG"/>
</dbReference>
<dbReference type="SMART" id="SM00175">
    <property type="entry name" value="RAB"/>
    <property type="match status" value="1"/>
</dbReference>
<dbReference type="SMART" id="SM00176">
    <property type="entry name" value="RAN"/>
    <property type="match status" value="1"/>
</dbReference>
<dbReference type="SMART" id="SM00173">
    <property type="entry name" value="RAS"/>
    <property type="match status" value="1"/>
</dbReference>
<dbReference type="SMART" id="SM00174">
    <property type="entry name" value="RHO"/>
    <property type="match status" value="1"/>
</dbReference>
<dbReference type="SUPFAM" id="SSF52540">
    <property type="entry name" value="P-loop containing nucleoside triphosphate hydrolases"/>
    <property type="match status" value="1"/>
</dbReference>
<dbReference type="PROSITE" id="PS51419">
    <property type="entry name" value="RAB"/>
    <property type="match status" value="1"/>
</dbReference>
<feature type="chain" id="PRO_0000289799" description="Ras-related protein Rab-5A">
    <location>
        <begin position="1"/>
        <end position="215"/>
    </location>
</feature>
<feature type="region of interest" description="Disordered" evidence="5">
    <location>
        <begin position="185"/>
        <end position="215"/>
    </location>
</feature>
<feature type="short sequence motif" description="Switch 1" evidence="2">
    <location>
        <begin position="44"/>
        <end position="56"/>
    </location>
</feature>
<feature type="short sequence motif" description="Switch 2" evidence="2">
    <location>
        <begin position="77"/>
        <end position="93"/>
    </location>
</feature>
<feature type="compositionally biased region" description="Polar residues" evidence="5">
    <location>
        <begin position="203"/>
        <end position="215"/>
    </location>
</feature>
<feature type="binding site" evidence="2">
    <location>
        <position position="29"/>
    </location>
    <ligand>
        <name>GTP</name>
        <dbReference type="ChEBI" id="CHEBI:37565"/>
    </ligand>
</feature>
<feature type="binding site" evidence="2">
    <location>
        <position position="30"/>
    </location>
    <ligand>
        <name>GTP</name>
        <dbReference type="ChEBI" id="CHEBI:37565"/>
    </ligand>
</feature>
<feature type="binding site" evidence="2">
    <location>
        <position position="32"/>
    </location>
    <ligand>
        <name>GTP</name>
        <dbReference type="ChEBI" id="CHEBI:37565"/>
    </ligand>
</feature>
<feature type="binding site" evidence="2">
    <location>
        <position position="33"/>
    </location>
    <ligand>
        <name>GTP</name>
        <dbReference type="ChEBI" id="CHEBI:37565"/>
    </ligand>
</feature>
<feature type="binding site" evidence="2">
    <location>
        <position position="34"/>
    </location>
    <ligand>
        <name>GTP</name>
        <dbReference type="ChEBI" id="CHEBI:37565"/>
    </ligand>
</feature>
<feature type="binding site" evidence="2">
    <location>
        <position position="34"/>
    </location>
    <ligand>
        <name>Mg(2+)</name>
        <dbReference type="ChEBI" id="CHEBI:18420"/>
    </ligand>
</feature>
<feature type="binding site" evidence="2">
    <location>
        <position position="35"/>
    </location>
    <ligand>
        <name>GTP</name>
        <dbReference type="ChEBI" id="CHEBI:37565"/>
    </ligand>
</feature>
<feature type="binding site" evidence="2">
    <location>
        <position position="46"/>
    </location>
    <ligand>
        <name>GTP</name>
        <dbReference type="ChEBI" id="CHEBI:37565"/>
    </ligand>
</feature>
<feature type="binding site" evidence="2">
    <location>
        <position position="47"/>
    </location>
    <ligand>
        <name>GTP</name>
        <dbReference type="ChEBI" id="CHEBI:37565"/>
    </ligand>
</feature>
<feature type="binding site" evidence="2">
    <location>
        <position position="52"/>
    </location>
    <ligand>
        <name>GTP</name>
        <dbReference type="ChEBI" id="CHEBI:37565"/>
    </ligand>
</feature>
<feature type="binding site" evidence="2">
    <location>
        <position position="52"/>
    </location>
    <ligand>
        <name>Mg(2+)</name>
        <dbReference type="ChEBI" id="CHEBI:18420"/>
    </ligand>
</feature>
<feature type="binding site" evidence="2">
    <location>
        <position position="78"/>
    </location>
    <ligand>
        <name>GTP</name>
        <dbReference type="ChEBI" id="CHEBI:37565"/>
    </ligand>
</feature>
<feature type="binding site" evidence="2">
    <location>
        <position position="133"/>
    </location>
    <ligand>
        <name>GTP</name>
        <dbReference type="ChEBI" id="CHEBI:37565"/>
    </ligand>
</feature>
<feature type="binding site" evidence="2">
    <location>
        <position position="134"/>
    </location>
    <ligand>
        <name>GTP</name>
        <dbReference type="ChEBI" id="CHEBI:37565"/>
    </ligand>
</feature>
<feature type="binding site" evidence="2">
    <location>
        <position position="136"/>
    </location>
    <ligand>
        <name>GTP</name>
        <dbReference type="ChEBI" id="CHEBI:37565"/>
    </ligand>
</feature>
<feature type="binding site" evidence="2">
    <location>
        <position position="164"/>
    </location>
    <ligand>
        <name>GTP</name>
        <dbReference type="ChEBI" id="CHEBI:37565"/>
    </ligand>
</feature>
<feature type="binding site" evidence="2">
    <location>
        <position position="165"/>
    </location>
    <ligand>
        <name>GTP</name>
        <dbReference type="ChEBI" id="CHEBI:37565"/>
    </ligand>
</feature>
<feature type="modified residue" description="Phosphoserine" evidence="2">
    <location>
        <position position="84"/>
    </location>
</feature>
<feature type="lipid moiety-binding region" description="S-geranylgeranyl cysteine" evidence="2">
    <location>
        <position position="212"/>
    </location>
</feature>
<feature type="lipid moiety-binding region" description="S-geranylgeranyl cysteine" evidence="2">
    <location>
        <position position="213"/>
    </location>
</feature>
<sequence length="215" mass="23747">MANRGATRPNGPNTGNKICQFKLVLLGESAVGKSSLVLRFVKGQFHEFQESTIGAAFLTQTVCLDDTTVKFEIWDTAGQERYHSLAPMYYRGAQAAIVVYDITNEESFARAKNWVKELQRQASPNIVIALSGNKADLANKRAVDFQEAQSYADDNSLLFMETSAKTSMNVNEIFMAIAKKLPKNEPQNPGINCTRGRGVDLTEPTQPTRSQCCSN</sequence>
<organism>
    <name type="scientific">Sus scrofa</name>
    <name type="common">Pig</name>
    <dbReference type="NCBI Taxonomy" id="9823"/>
    <lineage>
        <taxon>Eukaryota</taxon>
        <taxon>Metazoa</taxon>
        <taxon>Chordata</taxon>
        <taxon>Craniata</taxon>
        <taxon>Vertebrata</taxon>
        <taxon>Euteleostomi</taxon>
        <taxon>Mammalia</taxon>
        <taxon>Eutheria</taxon>
        <taxon>Laurasiatheria</taxon>
        <taxon>Artiodactyla</taxon>
        <taxon>Suina</taxon>
        <taxon>Suidae</taxon>
        <taxon>Sus</taxon>
    </lineage>
</organism>
<accession>Q06AU6</accession>
<protein>
    <recommendedName>
        <fullName>Ras-related protein Rab-5A</fullName>
        <ecNumber evidence="2">3.6.5.2</ecNumber>
    </recommendedName>
</protein>
<comment type="function">
    <text evidence="1 2 4">The small GTPases Rab are key regulators of intracellular membrane trafficking, from the formation of transport vesicles to their fusion with membranes. Rabs cycle between an inactive GDP-bound form and an active GTP-bound form that is able to recruit to membranes different sets of downstream effectors directly responsible for vesicle formation, movement, tethering and fusion. RAB5A is required for the fusion of plasma membranes and early endosomes. Contributes to the regulation of filopodia extension. Required for the exosomal release of SDCBP, CD63, PDCD6IP and syndecan. Regulates maturation of apoptotic cell-containing phagosomes, probably downstream of DYN2 and PIK3C3.</text>
</comment>
<comment type="catalytic activity">
    <reaction evidence="2">
        <text>GTP + H2O = GDP + phosphate + H(+)</text>
        <dbReference type="Rhea" id="RHEA:19669"/>
        <dbReference type="ChEBI" id="CHEBI:15377"/>
        <dbReference type="ChEBI" id="CHEBI:15378"/>
        <dbReference type="ChEBI" id="CHEBI:37565"/>
        <dbReference type="ChEBI" id="CHEBI:43474"/>
        <dbReference type="ChEBI" id="CHEBI:58189"/>
        <dbReference type="EC" id="3.6.5.2"/>
    </reaction>
    <physiologicalReaction direction="left-to-right" evidence="2">
        <dbReference type="Rhea" id="RHEA:19670"/>
    </physiologicalReaction>
</comment>
<comment type="cofactor">
    <cofactor evidence="2">
        <name>Mg(2+)</name>
        <dbReference type="ChEBI" id="CHEBI:18420"/>
    </cofactor>
</comment>
<comment type="activity regulation">
    <text evidence="1 6">Regulated by guanine nucleotide exchange factors (GEFs) including RINL, which promote the exchange of bound GDP for free GTP (By similarity). Regulated by GTPase activating proteins (GAPs) which increase the GTP hydrolysis activity (Probable). Inhibited by GDP dissociation inhibitors (GDIs) (Probable).</text>
</comment>
<comment type="subunit">
    <text evidence="1 2 3 4">Interacts with GDI1; this promotes dissociation from membranes; phosphorylation at Ser-84 disrupts this interaction (By similarity). Interacts with GDI2; phosphorylation at Ser-84 disrupts the interaction (By similarity). Interacts with SGSM1 and SGSM3 (By similarity). Interacts with PIK3CB. Interacts with RIN1 and GAPVD1, which regulate its pathway, probably by acting as a GEF. Interacts with RINL. Interacts with ALS2CL, SUN2, ZFYVE20 and RUFY1. Interacts with RABEP1; one RABEP1 homodimer binds two RAB5A chains, but at opposite sides of the dimer. Interacts with OCRL and INPP5F. May be a component of a complex composed of RAB5A, DYN2 and PIK3C3. Does not interact with the BLOC-3 complex (heterodimer of HPS1 and HPS4). Interacts with CLN5. Interacts with APPL2 (By similarity). Interacts with F8A1/F8A2/F8A3 (By similarity). Found in a complex with F8A1/F8A2/F8A3, HTT and RAB5A; mediates the recruitment of HTT by RAB5A onto early endosomes (By similarity). Interacts with ATP9A (By similarity). Interacts with PPP1R21; mediates the recruitment of FERRY complex by RAB5A onto early endosomes (By similarity).</text>
</comment>
<comment type="subcellular location">
    <subcellularLocation>
        <location evidence="2">Cell membrane</location>
        <topology evidence="2">Lipid-anchor</topology>
        <orientation evidence="1">Cytoplasmic side</orientation>
    </subcellularLocation>
    <subcellularLocation>
        <location evidence="2">Early endosome membrane</location>
        <topology evidence="2">Lipid-anchor</topology>
    </subcellularLocation>
    <subcellularLocation>
        <location evidence="2">Melanosome</location>
    </subcellularLocation>
    <subcellularLocation>
        <location evidence="2">Cytoplasmic vesicle</location>
    </subcellularLocation>
    <subcellularLocation>
        <location evidence="1">Cell projection</location>
        <location evidence="1">Ruffle</location>
    </subcellularLocation>
    <subcellularLocation>
        <location evidence="2">Membrane</location>
    </subcellularLocation>
    <subcellularLocation>
        <location evidence="2">Cytoplasm</location>
        <location evidence="2">Cytosol</location>
    </subcellularLocation>
    <subcellularLocation>
        <location evidence="4">Cytoplasmic vesicle</location>
        <location evidence="4">Phagosome membrane</location>
    </subcellularLocation>
    <subcellularLocation>
        <location evidence="2">Endosome membrane</location>
    </subcellularLocation>
    <text evidence="2">Enriched in stage I melanosomes. Alternates between membrane-bound and cytosolic forms.</text>
</comment>
<comment type="domain">
    <text evidence="2">Switch 1, switch 2 and the interswitch regions are characteristic of Rab GTPases and mediate the interactions with Rab downstream effectors. The switch regions undergo conformational changes upon nucleotide binding which drive interaction with specific sets of effector proteins, with most effectors only binding to GTP-bound Rab.</text>
</comment>
<comment type="PTM">
    <text evidence="2">Phosphorylation of Ser-84 in the switch II region by LRRK2 prevents the association of RAB regulatory proteins, including RAB GDP dissociation inhibitors GDI1 and GDI2.</text>
</comment>
<comment type="similarity">
    <text evidence="6">Belongs to the small GTPase superfamily. Rab family.</text>
</comment>
<reference key="1">
    <citation type="submission" date="2006-08" db="EMBL/GenBank/DDBJ databases">
        <authorList>
            <person name="Liu G.Y."/>
        </authorList>
    </citation>
    <scope>NUCLEOTIDE SEQUENCE [LARGE SCALE MRNA]</scope>
</reference>
<evidence type="ECO:0000250" key="1">
    <source>
        <dbReference type="UniProtKB" id="P18066"/>
    </source>
</evidence>
<evidence type="ECO:0000250" key="2">
    <source>
        <dbReference type="UniProtKB" id="P20339"/>
    </source>
</evidence>
<evidence type="ECO:0000250" key="3">
    <source>
        <dbReference type="UniProtKB" id="Q0IIG7"/>
    </source>
</evidence>
<evidence type="ECO:0000250" key="4">
    <source>
        <dbReference type="UniProtKB" id="Q9CQD1"/>
    </source>
</evidence>
<evidence type="ECO:0000256" key="5">
    <source>
        <dbReference type="SAM" id="MobiDB-lite"/>
    </source>
</evidence>
<evidence type="ECO:0000305" key="6"/>
<proteinExistence type="evidence at transcript level"/>
<keyword id="KW-1003">Cell membrane</keyword>
<keyword id="KW-0966">Cell projection</keyword>
<keyword id="KW-0963">Cytoplasm</keyword>
<keyword id="KW-0968">Cytoplasmic vesicle</keyword>
<keyword id="KW-0254">Endocytosis</keyword>
<keyword id="KW-0967">Endosome</keyword>
<keyword id="KW-0342">GTP-binding</keyword>
<keyword id="KW-0378">Hydrolase</keyword>
<keyword id="KW-0449">Lipoprotein</keyword>
<keyword id="KW-0460">Magnesium</keyword>
<keyword id="KW-0472">Membrane</keyword>
<keyword id="KW-0479">Metal-binding</keyword>
<keyword id="KW-0547">Nucleotide-binding</keyword>
<keyword id="KW-0581">Phagocytosis</keyword>
<keyword id="KW-0597">Phosphoprotein</keyword>
<keyword id="KW-0636">Prenylation</keyword>
<keyword id="KW-0653">Protein transport</keyword>
<keyword id="KW-1185">Reference proteome</keyword>
<keyword id="KW-0813">Transport</keyword>
<name>RAB5A_PIG</name>
<gene>
    <name type="primary">RAB5A</name>
</gene>